<comment type="function">
    <text>Hydrolyzes broad-spectrum beta-lactam antibiotics. Active against all third-generation cephalosporins but ceftazidime.</text>
</comment>
<comment type="catalytic activity">
    <reaction evidence="2">
        <text>a beta-lactam + H2O = a substituted beta-amino acid</text>
        <dbReference type="Rhea" id="RHEA:20401"/>
        <dbReference type="ChEBI" id="CHEBI:15377"/>
        <dbReference type="ChEBI" id="CHEBI:35627"/>
        <dbReference type="ChEBI" id="CHEBI:140347"/>
        <dbReference type="EC" id="3.5.2.6"/>
    </reaction>
</comment>
<comment type="miscellaneous">
    <text>In strain KH11 OXY-2 is known as OXY-2a.</text>
</comment>
<comment type="miscellaneous">
    <text evidence="6">The class A beta-lactamase family has a specific amino-acid numbering system, sometimes called Ambler or ABL numbering and often misspelt as Amber. A multiple sequence alignment was used to derive a consensus sequence and then the consensus was numbered taking into account insertions and deletions. This allows use of identical numbers, e.g. for active site residues, despite differences in protein length. UniProt always uses natural numbering of residues, hence there appear to be differences in numbering between this entry and some papers.</text>
</comment>
<comment type="similarity">
    <text evidence="5">Belongs to the class-A beta-lactamase family.</text>
</comment>
<gene>
    <name type="primary">bla</name>
</gene>
<evidence type="ECO:0000250" key="1"/>
<evidence type="ECO:0000255" key="2">
    <source>
        <dbReference type="PROSITE-ProRule" id="PRU10101"/>
    </source>
</evidence>
<evidence type="ECO:0000269" key="3">
    <source>
    </source>
</evidence>
<evidence type="ECO:0000269" key="4">
    <source>
    </source>
</evidence>
<evidence type="ECO:0000305" key="5"/>
<evidence type="ECO:0000305" key="6">
    <source>
    </source>
</evidence>
<name>BLO2_KLEOX</name>
<keyword id="KW-0046">Antibiotic resistance</keyword>
<keyword id="KW-0903">Direct protein sequencing</keyword>
<keyword id="KW-0378">Hydrolase</keyword>
<keyword id="KW-0732">Signal</keyword>
<sequence length="290" mass="31136">MIKSSWRKIAMLAAAVPLLLASGALWASTDAIHQKLTDLEKRSGGRLGVALINTADNSQILYRGDERFAMCSTSKVMAAAAVLKQSESNKEVVNKRLEINAADLVVWSPITEKHLQSGMTLAELSAATLQYSDNTAMNLIIGYLGGPEKVTAFARSIGDATFRLDRTEPTLNTAIPGDERDTSTPLAMAESLRKLTLGDALGEQQRAQLVTWLKGNTTGGQSIRAGLPESWVVGDKTGAGDYGTTNDIAVIWPEDHAPLVLVTYFTQPQQDAKNRKEVLAAAAKIVTEGL</sequence>
<reference key="1">
    <citation type="journal article" date="1996" name="Antimicrob. Agents Chemother.">
        <title>Beta-lactamase gene promoters of 71 clinical strains of Klebsiella oxytoca.</title>
        <authorList>
            <person name="Fournier B."/>
            <person name="Lagrange P.H."/>
            <person name="Philippon A."/>
        </authorList>
    </citation>
    <scope>NUCLEOTIDE SEQUENCE [GENOMIC DNA]</scope>
    <source>
        <strain>SL911</strain>
    </source>
</reference>
<reference key="2">
    <citation type="journal article" date="1996" name="Antimicrob. Agents Chemother.">
        <title>Molecular aspects of high-level resistance to sulbactam-cefoperazone in Klebsiella oxytoca clinical isolates.</title>
        <authorList>
            <person name="Kimura K."/>
            <person name="Arakawa Y."/>
            <person name="Ohsuka S."/>
            <person name="Ito H."/>
            <person name="Suzuki K."/>
            <person name="Kurokawa H."/>
            <person name="Kato N."/>
            <person name="Ohta M."/>
        </authorList>
    </citation>
    <scope>NUCLEOTIDE SEQUENCE [GENOMIC DNA]</scope>
    <source>
        <strain>SB23</strain>
    </source>
</reference>
<reference key="3">
    <citation type="journal article" date="1999" name="Antimicrob. Agents Chemother.">
        <title>Genetic characterization of resistance to extended-spectrum beta-lactams in Klebsiella oxytoca isolates recovered from patients with septicemia at hospitals in the Stockholm area.</title>
        <authorList>
            <person name="Wu S.W."/>
            <person name="Dornbusch K."/>
            <person name="Kronvall G."/>
        </authorList>
    </citation>
    <scope>NUCLEOTIDE SEQUENCE [GENOMIC DNA]</scope>
    <source>
        <strain>KH11</strain>
    </source>
</reference>
<reference key="4">
    <citation type="journal article" date="1991" name="FEMS Microbiol. Lett.">
        <title>Cefotaxime-hydrolysing activity of the beta-lactamase of Klebsiella oxytoca D488 could be related to a threonine residue at position 140.</title>
        <authorList>
            <person name="Reynaud A."/>
            <person name="Peduzzi J."/>
            <person name="Barthelemy M."/>
            <person name="Labia R."/>
        </authorList>
    </citation>
    <scope>PROTEIN SEQUENCE OF 28-290</scope>
    <source>
        <strain>D488</strain>
    </source>
</reference>
<reference key="5">
    <citation type="journal article" date="1997" name="J. Antimicrob. Chemother.">
        <title>Characterization and amino acid sequence of the OXY-2 group beta-lactamase of pI 5.7 isolated from aztreonam-resistant Klebsiella oxytoca strain HB60.</title>
        <authorList>
            <person name="Farzaneh S."/>
            <person name="Peduzzi J."/>
            <person name="Sofer L."/>
            <person name="Reynaud A."/>
            <person name="Barthelemy M."/>
            <person name="Labia R."/>
        </authorList>
    </citation>
    <scope>PROTEIN SEQUENCE OF 28-290</scope>
    <source>
        <strain>HB60</strain>
    </source>
</reference>
<reference key="6">
    <citation type="journal article" date="1991" name="Biochem. J.">
        <title>A standard numbering scheme for the class A beta-lactamases.</title>
        <authorList>
            <person name="Ambler R.P."/>
            <person name="Coulson A.F."/>
            <person name="Frere J.M."/>
            <person name="Ghuysen J.M."/>
            <person name="Joris B."/>
            <person name="Forsman M."/>
            <person name="Levesque R.C."/>
            <person name="Tiraby G."/>
            <person name="Waley S.G."/>
        </authorList>
    </citation>
    <scope>AMINO ACID NUMBERING SCHEME</scope>
</reference>
<feature type="signal peptide" evidence="3 4">
    <location>
        <begin position="1"/>
        <end position="27"/>
    </location>
</feature>
<feature type="chain" id="PRO_0000016998" description="Beta-lactamase OXY-2">
    <location>
        <begin position="28"/>
        <end position="290"/>
    </location>
</feature>
<feature type="active site" description="Acyl-ester intermediate" evidence="2">
    <location>
        <position position="72"/>
    </location>
</feature>
<feature type="binding site" evidence="1">
    <location>
        <begin position="236"/>
        <end position="238"/>
    </location>
    <ligand>
        <name>substrate</name>
    </ligand>
</feature>
<feature type="sequence variant" description="In strain: KH11 and SB23.">
    <location>
        <position position="15"/>
    </location>
</feature>
<feature type="sequence variant" description="In strain: D488 and HB60.">
    <original>D</original>
    <variation>N</variation>
    <location>
        <position position="199"/>
    </location>
</feature>
<feature type="sequence variant" description="In strain: D488.">
    <original>A</original>
    <variation>V</variation>
    <location>
        <position position="225"/>
    </location>
</feature>
<feature type="sequence variant" description="In strain: D488.">
    <original>D</original>
    <variation>N</variation>
    <location>
        <position position="255"/>
    </location>
</feature>
<dbReference type="EC" id="3.5.2.6"/>
<dbReference type="EMBL" id="Z49084">
    <property type="protein sequence ID" value="CAA88908.1"/>
    <property type="molecule type" value="Genomic_DNA"/>
</dbReference>
<dbReference type="EMBL" id="D84548">
    <property type="protein sequence ID" value="BAA12695.1"/>
    <property type="molecule type" value="Genomic_DNA"/>
</dbReference>
<dbReference type="EMBL" id="Y17714">
    <property type="protein sequence ID" value="CAB42614.1"/>
    <property type="molecule type" value="Genomic_DNA"/>
</dbReference>
<dbReference type="SMR" id="P23954"/>
<dbReference type="CARD" id="ARO:3002402">
    <property type="molecule name" value="OXY-2-7"/>
    <property type="mechanism identifier" value="ARO:0001004"/>
    <property type="mechanism name" value="antibiotic inactivation"/>
</dbReference>
<dbReference type="OrthoDB" id="9784149at2"/>
<dbReference type="GO" id="GO:0008800">
    <property type="term" value="F:beta-lactamase activity"/>
    <property type="evidence" value="ECO:0007669"/>
    <property type="project" value="UniProtKB-EC"/>
</dbReference>
<dbReference type="GO" id="GO:0030655">
    <property type="term" value="P:beta-lactam antibiotic catabolic process"/>
    <property type="evidence" value="ECO:0007669"/>
    <property type="project" value="InterPro"/>
</dbReference>
<dbReference type="GO" id="GO:0046677">
    <property type="term" value="P:response to antibiotic"/>
    <property type="evidence" value="ECO:0007669"/>
    <property type="project" value="UniProtKB-KW"/>
</dbReference>
<dbReference type="Gene3D" id="3.40.710.10">
    <property type="entry name" value="DD-peptidase/beta-lactamase superfamily"/>
    <property type="match status" value="1"/>
</dbReference>
<dbReference type="InterPro" id="IPR012338">
    <property type="entry name" value="Beta-lactam/transpept-like"/>
</dbReference>
<dbReference type="InterPro" id="IPR045155">
    <property type="entry name" value="Beta-lactam_cat"/>
</dbReference>
<dbReference type="InterPro" id="IPR000871">
    <property type="entry name" value="Beta-lactam_class-A"/>
</dbReference>
<dbReference type="InterPro" id="IPR023650">
    <property type="entry name" value="Beta-lactam_class-A_AS"/>
</dbReference>
<dbReference type="NCBIfam" id="NF033103">
    <property type="entry name" value="bla_class_A"/>
    <property type="match status" value="1"/>
</dbReference>
<dbReference type="NCBIfam" id="NF000271">
    <property type="entry name" value="blaOXY"/>
    <property type="match status" value="1"/>
</dbReference>
<dbReference type="PANTHER" id="PTHR35333">
    <property type="entry name" value="BETA-LACTAMASE"/>
    <property type="match status" value="1"/>
</dbReference>
<dbReference type="PANTHER" id="PTHR35333:SF3">
    <property type="entry name" value="BETA-LACTAMASE-TYPE TRANSPEPTIDASE FOLD CONTAINING PROTEIN"/>
    <property type="match status" value="1"/>
</dbReference>
<dbReference type="Pfam" id="PF13354">
    <property type="entry name" value="Beta-lactamase2"/>
    <property type="match status" value="1"/>
</dbReference>
<dbReference type="PRINTS" id="PR00118">
    <property type="entry name" value="BLACTAMASEA"/>
</dbReference>
<dbReference type="SUPFAM" id="SSF56601">
    <property type="entry name" value="beta-lactamase/transpeptidase-like"/>
    <property type="match status" value="1"/>
</dbReference>
<dbReference type="PROSITE" id="PS00146">
    <property type="entry name" value="BETA_LACTAMASE_A"/>
    <property type="match status" value="1"/>
</dbReference>
<accession>P23954</accession>
<accession>P71418</accession>
<protein>
    <recommendedName>
        <fullName>Beta-lactamase OXY-2</fullName>
        <ecNumber>3.5.2.6</ecNumber>
    </recommendedName>
    <alternativeName>
        <fullName>Penicillinase</fullName>
    </alternativeName>
</protein>
<proteinExistence type="evidence at protein level"/>
<organism>
    <name type="scientific">Klebsiella oxytoca</name>
    <dbReference type="NCBI Taxonomy" id="571"/>
    <lineage>
        <taxon>Bacteria</taxon>
        <taxon>Pseudomonadati</taxon>
        <taxon>Pseudomonadota</taxon>
        <taxon>Gammaproteobacteria</taxon>
        <taxon>Enterobacterales</taxon>
        <taxon>Enterobacteriaceae</taxon>
        <taxon>Klebsiella/Raoultella group</taxon>
        <taxon>Klebsiella</taxon>
    </lineage>
</organism>